<evidence type="ECO:0000255" key="1">
    <source>
        <dbReference type="HAMAP-Rule" id="MF_01330"/>
    </source>
</evidence>
<sequence length="2298" mass="269807">MKGHQFKSWIFELREILREIKNSHYFLDSWTQFNSVGSFIHIFFHQERFIKLLDPRIWSILLSRNSQGSTSNRYFTIKGVVLFVVAVLIYRINNRNMVERKNLYLTGLLPIPMNSIGPRNDTLEESFGSSNINRLIVSLLYLPKGKKISESSFLDPKESTWVLPITKKCIMPESNWSSRWWRNWIGKKRDSSRKISNETVAGIDISFKEKDIKYLEFLFVYYMDDPIRKGHDWELFDRLSPSKRRNIINLNSGQLFEILVKDWICYLMFAFREKIPIEVEGFFKQQGAGSTIQSNDIEHVSHLFSRNKWAISLQNCAQFHMWQFRQDLFVSWGKNPHESDFLRNISRENWIWLDNVWLVNKDRFFSKVRNVSSNIQYDSTRSSFVQVTDSSQLKGSSDQFRDHFDSISNEDSEYHTLINQREIQQLKERSILWDPSFLQTERTEIESDQFPKCLSGYSSMPRLFTEREKRMNNHLLPEEIEEFLGNPTRPIRSFFSDRWSELHLGSNPTERSTRDQKLLKKEQDVSFVPSRRSENKEIVNIFKIITYLQNTVSIHPISSDLGCDMVPKDELDMDSSNKISFLNKNPFFDLFHLFHDRNRGGSTLHHDFESEERFQEMADLFTLSITEPDLVYHKGFAFSIDSYGLDQKQFLNEVFNSRDESKKKSLLVLPPIFYEENESFYRRIRKKWVRISCGNDLEDPKPKRVVFASNNIMEAVNQYRLIRNLIQIQYSTYGYIRNVLNRFFLMNRSDRNFEYGIQRDQIGNDTLNHRTIMKYTINQHLSNLKKSQKKWFDPLIFLSRTERSINRDPNAYRYKWSNGSKNFQEHLEHFVSEQKSRFQVVFDRLRINQYSIDWSEVIDKKDLSKSLRFFLSKLLLFLSKLLLFLSNSLPFFFVSFENIPIHRSEIHIYELKGPNDQLCNQLLESIGLQIVHLKKLKPFLLDDHNTSQKSKFLINGGTISPFLFNKIPKWMIDSFHTRKNRRKSFDNTDSYFSMISHDQDNWLNPVKPFHRSSLISSFYKANRLRFLNNPHHFCFYCNKRFPFYVEKARINNYDFTYGQFLNILFIRNKIFSLCGGKKKHAFLERDTISPSPIESQVSNIFISNDFPQSGDERYNLYKSFHFAIRSDPLVRRAIYSIADISGTPLTEGQIVNFERTYCQPLSDMNLSDSEEKNLHQYLNFNSNMGLIHTPCSEKYLPSEKRKKRSLCLKKCVEKGQMDRTFQRDSAFSTLSKWNLVQTYMPWFLTSTGYKYLNLIFLDTFSDLLPILSSSQKFVSIFHDIMHGSDISWRILQKKWCLPQWNLISEISSKCLHNLLLSEEMIHRNNESPLISTHLRSPNVREFLYSILFLLLVAGYLVRTHLLFVSRAYSELQTEFEKVKSLMIPSYMIELRKLLDRYPTSELNSFWLKNLFLVALEQLGDSLEEIRGSGGNMLWGSDPAYGVKSIRSKKKYLNINFIDIIDLISIIPNPINRITFSRNTRHLSHTSKEIYSLIRKRKNVSGDWIDDKIESWVANSDSIDDKEREFLVQFSTLTAEKRIDQILLSLTHSDHLSKNDSGYQMIEQPGTIYLRYLVDIHKKYLMNYEFNTSCLVERRIFLAHYQTITYSQTSCGANSFHFPSHGKPFSLRLALSPSRGILVIGSIGTGRSYLVKYLATNSYVPFITVFLNKFLDNKPKGFFIDDIDIDASDDIDASDDIDASNDIDDSDDIDRELDTELELLTMMNALTMDMMSEIDRFYITLQFELAKAMSPCIIWIPNIHDLDVNESNYLSLGLLVNSLSRDCERCSTRNILVIASTHIPKKVDPALIAPNKLNTCIKIRRLLIPQQRKHFFTLSYTRGFHLEKKMFHTNGFESITMGSNARDLVALTNEALSISITQKKSIIDTNTIRSALHRQTWDLRSQVRSVQDHGILFYQIGRAVAQNVLLSNCPIDPISIYMKKKSCNEGDSYLYKWYFELGTSMKKLTILLYLLSCSAGSVAQDLWSLPGPDEKNGITSYGFVENDSDLVHGLLEVEGALVGSSRTEKDCSQFDNDRVTLLLRSEPRNPLYMMQNGSCSIVDQRFLYEKYESEFEEGEGEGVLDPQQIEEDLFNHIVWAPRIWRPWGFLFDCIERPNELGFPYWARSFRGKRIIYDEKDELQANDSEFLQSGTVQYQTRDRSSKEQGFFRISQFIWDPADPLFFLFKDQPFVSVFSHREFFADEEMSKGLLTSQTDPPTSIYKRWFIKNTQEKHFELLIHRQRWLRTNSSLSNGFFRSNTPSESYQYLSNLFLSNGTLLDQMTKTLLRKRWLFPDEMKIGFM</sequence>
<keyword id="KW-0067">ATP-binding</keyword>
<keyword id="KW-0150">Chloroplast</keyword>
<keyword id="KW-0547">Nucleotide-binding</keyword>
<keyword id="KW-0934">Plastid</keyword>
<comment type="function">
    <text evidence="1">Probable ATPase of unknown function. Its presence in a non-photosynthetic plant (Epifagus virginiana) and experiments in tobacco indicate that it has an essential function which is probably not related to photosynthesis.</text>
</comment>
<comment type="subcellular location">
    <subcellularLocation>
        <location evidence="1">Plastid</location>
        <location evidence="1">Chloroplast stroma</location>
    </subcellularLocation>
</comment>
<comment type="similarity">
    <text evidence="1">Belongs to the Ycf2 family.</text>
</comment>
<geneLocation type="chloroplast"/>
<protein>
    <recommendedName>
        <fullName evidence="1">Protein Ycf2</fullName>
    </recommendedName>
</protein>
<organism>
    <name type="scientific">Carica papaya</name>
    <name type="common">Papaya</name>
    <dbReference type="NCBI Taxonomy" id="3649"/>
    <lineage>
        <taxon>Eukaryota</taxon>
        <taxon>Viridiplantae</taxon>
        <taxon>Streptophyta</taxon>
        <taxon>Embryophyta</taxon>
        <taxon>Tracheophyta</taxon>
        <taxon>Spermatophyta</taxon>
        <taxon>Magnoliopsida</taxon>
        <taxon>eudicotyledons</taxon>
        <taxon>Gunneridae</taxon>
        <taxon>Pentapetalae</taxon>
        <taxon>rosids</taxon>
        <taxon>malvids</taxon>
        <taxon>Brassicales</taxon>
        <taxon>Caricaceae</taxon>
        <taxon>Carica</taxon>
    </lineage>
</organism>
<dbReference type="EMBL" id="EU431223">
    <property type="protein sequence ID" value="ABY86826.1"/>
    <property type="molecule type" value="Genomic_DNA"/>
</dbReference>
<dbReference type="EMBL" id="EU431223">
    <property type="protein sequence ID" value="ABY86843.1"/>
    <property type="molecule type" value="Genomic_DNA"/>
</dbReference>
<dbReference type="KEGG" id="cpap:5878323"/>
<dbReference type="KEGG" id="cpap:5878386"/>
<dbReference type="OrthoDB" id="1042855at2759"/>
<dbReference type="GO" id="GO:0009570">
    <property type="term" value="C:chloroplast stroma"/>
    <property type="evidence" value="ECO:0007669"/>
    <property type="project" value="UniProtKB-SubCell"/>
</dbReference>
<dbReference type="GO" id="GO:0005524">
    <property type="term" value="F:ATP binding"/>
    <property type="evidence" value="ECO:0007669"/>
    <property type="project" value="UniProtKB-KW"/>
</dbReference>
<dbReference type="GO" id="GO:0016887">
    <property type="term" value="F:ATP hydrolysis activity"/>
    <property type="evidence" value="ECO:0007669"/>
    <property type="project" value="InterPro"/>
</dbReference>
<dbReference type="CDD" id="cd19505">
    <property type="entry name" value="RecA-like_Ycf2"/>
    <property type="match status" value="1"/>
</dbReference>
<dbReference type="Gene3D" id="3.40.50.300">
    <property type="entry name" value="P-loop containing nucleotide triphosphate hydrolases"/>
    <property type="match status" value="1"/>
</dbReference>
<dbReference type="HAMAP" id="MF_01330">
    <property type="entry name" value="Ycf2"/>
    <property type="match status" value="1"/>
</dbReference>
<dbReference type="InterPro" id="IPR003593">
    <property type="entry name" value="AAA+_ATPase"/>
</dbReference>
<dbReference type="InterPro" id="IPR003959">
    <property type="entry name" value="ATPase_AAA_core"/>
</dbReference>
<dbReference type="InterPro" id="IPR027417">
    <property type="entry name" value="P-loop_NTPase"/>
</dbReference>
<dbReference type="InterPro" id="IPR008543">
    <property type="entry name" value="Uncharacterised_Ycf2"/>
</dbReference>
<dbReference type="InterPro" id="IPR056777">
    <property type="entry name" value="Ycf2_N"/>
</dbReference>
<dbReference type="PANTHER" id="PTHR33078:SF92">
    <property type="entry name" value="PROTEIN YCF2"/>
    <property type="match status" value="1"/>
</dbReference>
<dbReference type="PANTHER" id="PTHR33078">
    <property type="entry name" value="PROTEIN YCF2-RELATED"/>
    <property type="match status" value="1"/>
</dbReference>
<dbReference type="Pfam" id="PF00004">
    <property type="entry name" value="AAA"/>
    <property type="match status" value="1"/>
</dbReference>
<dbReference type="Pfam" id="PF05695">
    <property type="entry name" value="Ycf2"/>
    <property type="match status" value="1"/>
</dbReference>
<dbReference type="SMART" id="SM00382">
    <property type="entry name" value="AAA"/>
    <property type="match status" value="1"/>
</dbReference>
<dbReference type="SUPFAM" id="SSF52540">
    <property type="entry name" value="P-loop containing nucleoside triphosphate hydrolases"/>
    <property type="match status" value="1"/>
</dbReference>
<accession>B1A978</accession>
<feature type="chain" id="PRO_0000343762" description="Protein Ycf2">
    <location>
        <begin position="1"/>
        <end position="2298"/>
    </location>
</feature>
<feature type="binding site" evidence="1">
    <location>
        <begin position="1640"/>
        <end position="1647"/>
    </location>
    <ligand>
        <name>ATP</name>
        <dbReference type="ChEBI" id="CHEBI:30616"/>
    </ligand>
</feature>
<reference key="1">
    <citation type="journal article" date="2008" name="Nature">
        <title>The draft genome of the transgenic tropical fruit tree papaya (Carica papaya Linnaeus).</title>
        <authorList>
            <person name="Ming R."/>
            <person name="Hou S."/>
            <person name="Feng Y."/>
            <person name="Yu Q."/>
            <person name="Dionne-Laporte A."/>
            <person name="Saw J.H."/>
            <person name="Senin P."/>
            <person name="Wang W."/>
            <person name="Ly B.V."/>
            <person name="Lewis K.L."/>
            <person name="Salzberg S.L."/>
            <person name="Feng L."/>
            <person name="Jones M.R."/>
            <person name="Skelton R.L."/>
            <person name="Murray J.E."/>
            <person name="Chen C."/>
            <person name="Qian W."/>
            <person name="Shen J."/>
            <person name="Du P."/>
            <person name="Eustice M."/>
            <person name="Tong E."/>
            <person name="Tang H."/>
            <person name="Lyons E."/>
            <person name="Paull R.E."/>
            <person name="Michael T.P."/>
            <person name="Wall K."/>
            <person name="Rice D.W."/>
            <person name="Albert H."/>
            <person name="Wang M.L."/>
            <person name="Zhu Y.J."/>
            <person name="Schatz M."/>
            <person name="Nagarajan N."/>
            <person name="Acob R.A."/>
            <person name="Guan P."/>
            <person name="Blas A."/>
            <person name="Wai C.M."/>
            <person name="Ackerman C.M."/>
            <person name="Ren Y."/>
            <person name="Liu C."/>
            <person name="Wang J."/>
            <person name="Wang J."/>
            <person name="Na J.K."/>
            <person name="Shakirov E.V."/>
            <person name="Haas B."/>
            <person name="Thimmapuram J."/>
            <person name="Nelson D."/>
            <person name="Wang X."/>
            <person name="Bowers J.E."/>
            <person name="Gschwend A.R."/>
            <person name="Delcher A.L."/>
            <person name="Singh R."/>
            <person name="Suzuki J.Y."/>
            <person name="Tripathi S."/>
            <person name="Neupane K."/>
            <person name="Wei H."/>
            <person name="Irikura B."/>
            <person name="Paidi M."/>
            <person name="Jiang N."/>
            <person name="Zhang W."/>
            <person name="Presting G."/>
            <person name="Windsor A."/>
            <person name="Navajas-Perez R."/>
            <person name="Torres M.J."/>
            <person name="Feltus F.A."/>
            <person name="Porter B."/>
            <person name="Li Y."/>
            <person name="Burroughs A.M."/>
            <person name="Luo M.C."/>
            <person name="Liu L."/>
            <person name="Christopher D.A."/>
            <person name="Mount S.M."/>
            <person name="Moore P.H."/>
            <person name="Sugimura T."/>
            <person name="Jiang J."/>
            <person name="Schuler M.A."/>
            <person name="Friedman V."/>
            <person name="Mitchell-Olds T."/>
            <person name="Shippen D.E."/>
            <person name="dePamphilis C.W."/>
            <person name="Palmer J.D."/>
            <person name="Freeling M."/>
            <person name="Paterson A.H."/>
            <person name="Gonsalves D."/>
            <person name="Wang L."/>
            <person name="Alam M."/>
        </authorList>
    </citation>
    <scope>NUCLEOTIDE SEQUENCE [LARGE SCALE GENOMIC DNA]</scope>
    <source>
        <strain>cv. SunUp</strain>
    </source>
</reference>
<gene>
    <name evidence="1" type="primary">ycf2-A</name>
</gene>
<gene>
    <name evidence="1" type="primary">ycf2-B</name>
</gene>
<proteinExistence type="inferred from homology"/>
<name>YCF2_CARPA</name>